<feature type="chain" id="PRO_0000264162" description="Transcriptional repressor NrdR">
    <location>
        <begin position="1"/>
        <end position="160"/>
    </location>
</feature>
<feature type="domain" description="ATP-cone" evidence="1">
    <location>
        <begin position="49"/>
        <end position="139"/>
    </location>
</feature>
<feature type="zinc finger region" evidence="1">
    <location>
        <begin position="3"/>
        <end position="34"/>
    </location>
</feature>
<reference key="1">
    <citation type="journal article" date="2006" name="J. Bacteriol.">
        <title>Comparison of the genome sequence of the poultry pathogen Bordetella avium with those of B. bronchiseptica, B. pertussis, and B. parapertussis reveals extensive diversity in surface structures associated with host interaction.</title>
        <authorList>
            <person name="Sebaihia M."/>
            <person name="Preston A."/>
            <person name="Maskell D.J."/>
            <person name="Kuzmiak H."/>
            <person name="Connell T.D."/>
            <person name="King N.D."/>
            <person name="Orndorff P.E."/>
            <person name="Miyamoto D.M."/>
            <person name="Thomson N.R."/>
            <person name="Harris D."/>
            <person name="Goble A."/>
            <person name="Lord A."/>
            <person name="Murphy L."/>
            <person name="Quail M.A."/>
            <person name="Rutter S."/>
            <person name="Squares R."/>
            <person name="Squares S."/>
            <person name="Woodward J."/>
            <person name="Parkhill J."/>
            <person name="Temple L.M."/>
        </authorList>
    </citation>
    <scope>NUCLEOTIDE SEQUENCE [LARGE SCALE GENOMIC DNA]</scope>
    <source>
        <strain>197N</strain>
    </source>
</reference>
<dbReference type="EMBL" id="AM167904">
    <property type="protein sequence ID" value="CAJ50570.1"/>
    <property type="molecule type" value="Genomic_DNA"/>
</dbReference>
<dbReference type="RefSeq" id="WP_012418599.1">
    <property type="nucleotide sequence ID" value="NC_010645.1"/>
</dbReference>
<dbReference type="SMR" id="Q2KV16"/>
<dbReference type="STRING" id="360910.BAV2960"/>
<dbReference type="GeneID" id="92933782"/>
<dbReference type="KEGG" id="bav:BAV2960"/>
<dbReference type="eggNOG" id="COG1327">
    <property type="taxonomic scope" value="Bacteria"/>
</dbReference>
<dbReference type="HOGENOM" id="CLU_108412_0_0_4"/>
<dbReference type="OrthoDB" id="9807461at2"/>
<dbReference type="Proteomes" id="UP000001977">
    <property type="component" value="Chromosome"/>
</dbReference>
<dbReference type="GO" id="GO:0005524">
    <property type="term" value="F:ATP binding"/>
    <property type="evidence" value="ECO:0007669"/>
    <property type="project" value="UniProtKB-KW"/>
</dbReference>
<dbReference type="GO" id="GO:0003677">
    <property type="term" value="F:DNA binding"/>
    <property type="evidence" value="ECO:0007669"/>
    <property type="project" value="UniProtKB-KW"/>
</dbReference>
<dbReference type="GO" id="GO:0008270">
    <property type="term" value="F:zinc ion binding"/>
    <property type="evidence" value="ECO:0007669"/>
    <property type="project" value="UniProtKB-UniRule"/>
</dbReference>
<dbReference type="GO" id="GO:0045892">
    <property type="term" value="P:negative regulation of DNA-templated transcription"/>
    <property type="evidence" value="ECO:0007669"/>
    <property type="project" value="UniProtKB-UniRule"/>
</dbReference>
<dbReference type="HAMAP" id="MF_00440">
    <property type="entry name" value="NrdR"/>
    <property type="match status" value="1"/>
</dbReference>
<dbReference type="InterPro" id="IPR005144">
    <property type="entry name" value="ATP-cone_dom"/>
</dbReference>
<dbReference type="InterPro" id="IPR055173">
    <property type="entry name" value="NrdR-like_N"/>
</dbReference>
<dbReference type="InterPro" id="IPR003796">
    <property type="entry name" value="RNR_NrdR-like"/>
</dbReference>
<dbReference type="NCBIfam" id="TIGR00244">
    <property type="entry name" value="transcriptional regulator NrdR"/>
    <property type="match status" value="1"/>
</dbReference>
<dbReference type="PANTHER" id="PTHR30455">
    <property type="entry name" value="TRANSCRIPTIONAL REPRESSOR NRDR"/>
    <property type="match status" value="1"/>
</dbReference>
<dbReference type="PANTHER" id="PTHR30455:SF2">
    <property type="entry name" value="TRANSCRIPTIONAL REPRESSOR NRDR"/>
    <property type="match status" value="1"/>
</dbReference>
<dbReference type="Pfam" id="PF03477">
    <property type="entry name" value="ATP-cone"/>
    <property type="match status" value="1"/>
</dbReference>
<dbReference type="Pfam" id="PF22811">
    <property type="entry name" value="Zn_ribbon_NrdR"/>
    <property type="match status" value="1"/>
</dbReference>
<dbReference type="PROSITE" id="PS51161">
    <property type="entry name" value="ATP_CONE"/>
    <property type="match status" value="1"/>
</dbReference>
<comment type="function">
    <text evidence="1">Negatively regulates transcription of bacterial ribonucleotide reductase nrd genes and operons by binding to NrdR-boxes.</text>
</comment>
<comment type="cofactor">
    <cofactor evidence="1">
        <name>Zn(2+)</name>
        <dbReference type="ChEBI" id="CHEBI:29105"/>
    </cofactor>
    <text evidence="1">Binds 1 zinc ion.</text>
</comment>
<comment type="similarity">
    <text evidence="1">Belongs to the NrdR family.</text>
</comment>
<evidence type="ECO:0000255" key="1">
    <source>
        <dbReference type="HAMAP-Rule" id="MF_00440"/>
    </source>
</evidence>
<name>NRDR_BORA1</name>
<accession>Q2KV16</accession>
<proteinExistence type="inferred from homology"/>
<organism>
    <name type="scientific">Bordetella avium (strain 197N)</name>
    <dbReference type="NCBI Taxonomy" id="360910"/>
    <lineage>
        <taxon>Bacteria</taxon>
        <taxon>Pseudomonadati</taxon>
        <taxon>Pseudomonadota</taxon>
        <taxon>Betaproteobacteria</taxon>
        <taxon>Burkholderiales</taxon>
        <taxon>Alcaligenaceae</taxon>
        <taxon>Bordetella</taxon>
    </lineage>
</organism>
<gene>
    <name evidence="1" type="primary">nrdR</name>
    <name type="ordered locus">BAV2960</name>
</gene>
<protein>
    <recommendedName>
        <fullName evidence="1">Transcriptional repressor NrdR</fullName>
    </recommendedName>
</protein>
<sequence length="160" mass="18040">MRCPFCGHADTQVVDSRVSEEGDTIRRRRRCLSCDKRFTTYERVELAMPTVVKRDGSRSEYDAAKLRGSLALALRKRPVSTEEVDGAVARIEDTLLASGAREVASEHIGELVMNELKRLDKVAYVRFASVYKSFEDIGEFVEAIREMQGPRLGAGKLRKE</sequence>
<keyword id="KW-0067">ATP-binding</keyword>
<keyword id="KW-0238">DNA-binding</keyword>
<keyword id="KW-0479">Metal-binding</keyword>
<keyword id="KW-0547">Nucleotide-binding</keyword>
<keyword id="KW-1185">Reference proteome</keyword>
<keyword id="KW-0678">Repressor</keyword>
<keyword id="KW-0804">Transcription</keyword>
<keyword id="KW-0805">Transcription regulation</keyword>
<keyword id="KW-0862">Zinc</keyword>
<keyword id="KW-0863">Zinc-finger</keyword>